<evidence type="ECO:0000250" key="1">
    <source>
        <dbReference type="UniProtKB" id="Q07914"/>
    </source>
</evidence>
<evidence type="ECO:0000250" key="2">
    <source>
        <dbReference type="UniProtKB" id="Q96DA6"/>
    </source>
</evidence>
<evidence type="ECO:0000250" key="3">
    <source>
        <dbReference type="UniProtKB" id="Q9CQV7"/>
    </source>
</evidence>
<evidence type="ECO:0000255" key="4"/>
<evidence type="ECO:0000255" key="5">
    <source>
        <dbReference type="PROSITE-ProRule" id="PRU00286"/>
    </source>
</evidence>
<evidence type="ECO:0000305" key="6"/>
<keyword id="KW-0007">Acetylation</keyword>
<keyword id="KW-0143">Chaperone</keyword>
<keyword id="KW-0472">Membrane</keyword>
<keyword id="KW-0496">Mitochondrion</keyword>
<keyword id="KW-0999">Mitochondrion inner membrane</keyword>
<keyword id="KW-0597">Phosphoprotein</keyword>
<keyword id="KW-0653">Protein transport</keyword>
<keyword id="KW-1185">Reference proteome</keyword>
<keyword id="KW-0811">Translocation</keyword>
<keyword id="KW-0812">Transmembrane</keyword>
<keyword id="KW-1133">Transmembrane helix</keyword>
<keyword id="KW-0813">Transport</keyword>
<protein>
    <recommendedName>
        <fullName>Mitochondrial import inner membrane translocase subunit TIM14</fullName>
    </recommendedName>
    <alternativeName>
        <fullName>DnaJ homolog subfamily C member 19</fullName>
    </alternativeName>
</protein>
<accession>Q3ZBN8</accession>
<feature type="initiator methionine" description="Removed" evidence="2">
    <location>
        <position position="1"/>
    </location>
</feature>
<feature type="chain" id="PRO_0000071099" description="Mitochondrial import inner membrane translocase subunit TIM14">
    <location>
        <begin position="2"/>
        <end position="116"/>
    </location>
</feature>
<feature type="topological domain" description="Mitochondrial intermembrane" evidence="4">
    <location>
        <begin position="2"/>
        <end position="3"/>
    </location>
</feature>
<feature type="transmembrane region" description="Helical" evidence="4">
    <location>
        <begin position="4"/>
        <end position="24"/>
    </location>
</feature>
<feature type="topological domain" description="Mitochondrial matrix" evidence="4">
    <location>
        <begin position="25"/>
        <end position="116"/>
    </location>
</feature>
<feature type="domain" description="J" evidence="5">
    <location>
        <begin position="62"/>
        <end position="116"/>
    </location>
</feature>
<feature type="modified residue" description="N-acetylalanine" evidence="2">
    <location>
        <position position="2"/>
    </location>
</feature>
<feature type="modified residue" description="Phosphoserine" evidence="2">
    <location>
        <position position="39"/>
    </location>
</feature>
<feature type="modified residue" description="Phosphoserine" evidence="2">
    <location>
        <position position="70"/>
    </location>
</feature>
<proteinExistence type="inferred from homology"/>
<dbReference type="EMBL" id="BC103193">
    <property type="protein sequence ID" value="AAI03194.1"/>
    <property type="molecule type" value="mRNA"/>
</dbReference>
<dbReference type="RefSeq" id="NP_001029630.1">
    <property type="nucleotide sequence ID" value="NM_001034458.1"/>
</dbReference>
<dbReference type="SMR" id="Q3ZBN8"/>
<dbReference type="FunCoup" id="Q3ZBN8">
    <property type="interactions" value="2896"/>
</dbReference>
<dbReference type="STRING" id="9913.ENSBTAP00000032039"/>
<dbReference type="PaxDb" id="9913-ENSBTAP00000032039"/>
<dbReference type="Ensembl" id="ENSBTAT00000032097.4">
    <property type="protein sequence ID" value="ENSBTAP00000032039.4"/>
    <property type="gene ID" value="ENSBTAG00000023513.5"/>
</dbReference>
<dbReference type="GeneID" id="513918"/>
<dbReference type="KEGG" id="bta:513918"/>
<dbReference type="CTD" id="131118"/>
<dbReference type="VEuPathDB" id="HostDB:ENSBTAG00000023513"/>
<dbReference type="eggNOG" id="KOG0723">
    <property type="taxonomic scope" value="Eukaryota"/>
</dbReference>
<dbReference type="GeneTree" id="ENSGT00940000154384"/>
<dbReference type="InParanoid" id="Q3ZBN8"/>
<dbReference type="OMA" id="EPRMNKR"/>
<dbReference type="OrthoDB" id="240298at2759"/>
<dbReference type="Proteomes" id="UP000009136">
    <property type="component" value="Chromosome 1"/>
</dbReference>
<dbReference type="Bgee" id="ENSBTAG00000023513">
    <property type="expression patterns" value="Expressed in tongue muscle and 105 other cell types or tissues"/>
</dbReference>
<dbReference type="GO" id="GO:0098800">
    <property type="term" value="C:inner mitochondrial membrane protein complex"/>
    <property type="evidence" value="ECO:0000250"/>
    <property type="project" value="UniProtKB"/>
</dbReference>
<dbReference type="GO" id="GO:0099617">
    <property type="term" value="C:matrix side of mitochondrial inner membrane"/>
    <property type="evidence" value="ECO:0000250"/>
    <property type="project" value="UniProtKB"/>
</dbReference>
<dbReference type="GO" id="GO:0001405">
    <property type="term" value="C:PAM complex, Tim23 associated import motor"/>
    <property type="evidence" value="ECO:0000318"/>
    <property type="project" value="GO_Central"/>
</dbReference>
<dbReference type="GO" id="GO:0001671">
    <property type="term" value="F:ATPase activator activity"/>
    <property type="evidence" value="ECO:0000318"/>
    <property type="project" value="GO_Central"/>
</dbReference>
<dbReference type="GO" id="GO:0048806">
    <property type="term" value="P:genitalia development"/>
    <property type="evidence" value="ECO:0007669"/>
    <property type="project" value="Ensembl"/>
</dbReference>
<dbReference type="GO" id="GO:0030150">
    <property type="term" value="P:protein import into mitochondrial matrix"/>
    <property type="evidence" value="ECO:0000318"/>
    <property type="project" value="GO_Central"/>
</dbReference>
<dbReference type="GO" id="GO:1900208">
    <property type="term" value="P:regulation of cardiolipin metabolic process"/>
    <property type="evidence" value="ECO:0000250"/>
    <property type="project" value="UniProtKB"/>
</dbReference>
<dbReference type="GO" id="GO:0007601">
    <property type="term" value="P:visual perception"/>
    <property type="evidence" value="ECO:0007669"/>
    <property type="project" value="Ensembl"/>
</dbReference>
<dbReference type="CDD" id="cd06257">
    <property type="entry name" value="DnaJ"/>
    <property type="match status" value="1"/>
</dbReference>
<dbReference type="FunFam" id="1.10.287.110:FF:000001">
    <property type="entry name" value="Import inner membrane translocase subunit tim14"/>
    <property type="match status" value="1"/>
</dbReference>
<dbReference type="Gene3D" id="1.10.287.110">
    <property type="entry name" value="DnaJ domain"/>
    <property type="match status" value="1"/>
</dbReference>
<dbReference type="InterPro" id="IPR001623">
    <property type="entry name" value="DnaJ_domain"/>
</dbReference>
<dbReference type="InterPro" id="IPR036869">
    <property type="entry name" value="J_dom_sf"/>
</dbReference>
<dbReference type="PANTHER" id="PTHR12763">
    <property type="match status" value="1"/>
</dbReference>
<dbReference type="PANTHER" id="PTHR12763:SF56">
    <property type="entry name" value="MITOCHONDRIAL IMPORT INNER MEMBRANE TRANSLOCASE SUBUNIT TIM14"/>
    <property type="match status" value="1"/>
</dbReference>
<dbReference type="Pfam" id="PF00226">
    <property type="entry name" value="DnaJ"/>
    <property type="match status" value="1"/>
</dbReference>
<dbReference type="SMART" id="SM00271">
    <property type="entry name" value="DnaJ"/>
    <property type="match status" value="1"/>
</dbReference>
<dbReference type="SUPFAM" id="SSF46565">
    <property type="entry name" value="Chaperone J-domain"/>
    <property type="match status" value="1"/>
</dbReference>
<dbReference type="PROSITE" id="PS50076">
    <property type="entry name" value="DNAJ_2"/>
    <property type="match status" value="1"/>
</dbReference>
<organism>
    <name type="scientific">Bos taurus</name>
    <name type="common">Bovine</name>
    <dbReference type="NCBI Taxonomy" id="9913"/>
    <lineage>
        <taxon>Eukaryota</taxon>
        <taxon>Metazoa</taxon>
        <taxon>Chordata</taxon>
        <taxon>Craniata</taxon>
        <taxon>Vertebrata</taxon>
        <taxon>Euteleostomi</taxon>
        <taxon>Mammalia</taxon>
        <taxon>Eutheria</taxon>
        <taxon>Laurasiatheria</taxon>
        <taxon>Artiodactyla</taxon>
        <taxon>Ruminantia</taxon>
        <taxon>Pecora</taxon>
        <taxon>Bovidae</taxon>
        <taxon>Bovinae</taxon>
        <taxon>Bos</taxon>
    </lineage>
</organism>
<sequence>MASTVVAVGLTIAAAGFAGRYALQAMKHMEPQVKQVFQSLPKTAFSGGYYRGGFEPKMTKREAALILGVSPTANKAKIRDAHRRIMLLNHPDKGGSPYIAAKINEAKDLLEGQAKK</sequence>
<name>TIM14_BOVIN</name>
<reference key="1">
    <citation type="submission" date="2005-08" db="EMBL/GenBank/DDBJ databases">
        <authorList>
            <consortium name="NIH - Mammalian Gene Collection (MGC) project"/>
        </authorList>
    </citation>
    <scope>NUCLEOTIDE SEQUENCE [LARGE SCALE MRNA]</scope>
    <source>
        <strain>Hereford</strain>
        <tissue>Rumen</tissue>
    </source>
</reference>
<gene>
    <name type="primary">DNAJC19</name>
    <name type="synonym">TIM14</name>
    <name type="synonym">TIMM14</name>
</gene>
<comment type="function">
    <text evidence="1 3">Mitochondrial co-chaperone which forms a complex with prohibitins to regulate cardiolipin remodeling (By similarity). May be a component of the PAM complex, a complex required for the translocation of transit peptide-containing proteins from the inner membrane into the mitochondrial matrix in an ATP-dependent manner. May act as a co-chaperone that stimulate the ATP-dependent activity (By similarity).</text>
</comment>
<comment type="subunit">
    <text evidence="1 3">Interacts with PHB2; the interaction associates DNAJC19 with the prohibitin complex. Interacts with TIMM16/PAM16 (By similarity). May be a component of the PAM complex at least composed of a mitochondrial HSP70 protein, GRPEL1 or GRPEL2, TIMM44, TIMM16/PAM16 and TIMM14/DNAJC19 (By similarity).</text>
</comment>
<comment type="subcellular location">
    <subcellularLocation>
        <location evidence="3">Mitochondrion inner membrane</location>
        <topology evidence="4">Single-pass membrane protein</topology>
        <orientation evidence="3">Matrix side</orientation>
    </subcellularLocation>
</comment>
<comment type="similarity">
    <text evidence="6">Belongs to the TIM14 family.</text>
</comment>